<gene>
    <name type="primary">U27</name>
</gene>
<name>VPAP_HHV6Z</name>
<organismHost>
    <name type="scientific">Homo sapiens</name>
    <name type="common">Human</name>
    <dbReference type="NCBI Taxonomy" id="9606"/>
</organismHost>
<evidence type="ECO:0000250" key="1"/>
<evidence type="ECO:0000256" key="2">
    <source>
        <dbReference type="SAM" id="MobiDB-lite"/>
    </source>
</evidence>
<evidence type="ECO:0000305" key="3"/>
<reference key="1">
    <citation type="journal article" date="1999" name="J. Virol.">
        <title>Human herpesvirus 6B genome sequence: coding content and comparison with human herpesvirus 6A.</title>
        <authorList>
            <person name="Dominguez G."/>
            <person name="Dambaugh T.R."/>
            <person name="Stamey F.R."/>
            <person name="Dewhurst S."/>
            <person name="Inoue N."/>
            <person name="Pellett P.E."/>
        </authorList>
    </citation>
    <scope>NUCLEOTIDE SEQUENCE [LARGE SCALE GENOMIC DNA]</scope>
</reference>
<proteinExistence type="inferred from homology"/>
<feature type="chain" id="PRO_0000408449" description="DNA polymerase processivity factor">
    <location>
        <begin position="1"/>
        <end position="366"/>
    </location>
</feature>
<feature type="region of interest" description="Disordered" evidence="2">
    <location>
        <begin position="1"/>
        <end position="25"/>
    </location>
</feature>
<feature type="region of interest" description="Disordered" evidence="2">
    <location>
        <begin position="286"/>
        <end position="366"/>
    </location>
</feature>
<feature type="compositionally biased region" description="Basic residues" evidence="2">
    <location>
        <begin position="1"/>
        <end position="16"/>
    </location>
</feature>
<feature type="compositionally biased region" description="Basic and acidic residues" evidence="2">
    <location>
        <begin position="286"/>
        <end position="308"/>
    </location>
</feature>
<feature type="compositionally biased region" description="Polar residues" evidence="2">
    <location>
        <begin position="313"/>
        <end position="322"/>
    </location>
</feature>
<feature type="compositionally biased region" description="Polar residues" evidence="2">
    <location>
        <begin position="330"/>
        <end position="339"/>
    </location>
</feature>
<keyword id="KW-0235">DNA replication</keyword>
<keyword id="KW-0238">DNA-binding</keyword>
<keyword id="KW-0597">Phosphoprotein</keyword>
<keyword id="KW-1185">Reference proteome</keyword>
<accession>Q9QJ40</accession>
<organism>
    <name type="scientific">Human herpesvirus 6B (strain Z29)</name>
    <name type="common">HHV-6 variant B</name>
    <name type="synonym">Human B lymphotropic virus</name>
    <dbReference type="NCBI Taxonomy" id="36351"/>
    <lineage>
        <taxon>Viruses</taxon>
        <taxon>Duplodnaviria</taxon>
        <taxon>Heunggongvirae</taxon>
        <taxon>Peploviricota</taxon>
        <taxon>Herviviricetes</taxon>
        <taxon>Herpesvirales</taxon>
        <taxon>Orthoherpesviridae</taxon>
        <taxon>Betaherpesvirinae</taxon>
        <taxon>Roseolovirus</taxon>
        <taxon>Roseolovirus humanbeta6b</taxon>
        <taxon>Human herpesvirus 6B</taxon>
    </lineage>
</organism>
<comment type="function">
    <text evidence="1">Accessory subunit of the DNA polymerase that acts to increase the processivity of polymerization.</text>
</comment>
<comment type="similarity">
    <text evidence="3">Belongs to the herpesviridae polymerase accessory protein family.</text>
</comment>
<protein>
    <recommendedName>
        <fullName>DNA polymerase processivity factor</fullName>
    </recommendedName>
    <alternativeName>
        <fullName>Phosphoprotein P41</fullName>
        <shortName>PP41</shortName>
    </alternativeName>
    <alternativeName>
        <fullName>Polymerase accessory protein</fullName>
        <shortName>PAP</shortName>
    </alternativeName>
</protein>
<sequence>MERGSRDHHRDHRDHREHRELREPPTLAFHMKSWKTINKPLKAFTKLLKENTTVTFTPQPSIIIQSAKNHLVQKLTIQAECLFLSDTEHFLTKTINNHIPLFESFMNIISNPEVTKLYIQHDSDLYTRVLVTASDTCTQASVPCVHGQEVVRDSGKSPLRIDLDHSTVSEVLKWLSPVTKTKRSGKSDAFMAHIIVQVNPPTIKFVTEMNELEFSNSNKVIFYDVNNMRFNLSAKNLQQALSMCAVIKTSCSLRTVAAKDCKLILTSKSTLLTVEAFLTQEQLKEESRFERMGKQDDGKGDRNHKNEDGSALASKQETQYKITNYMVPTKNGTAGSSLFNEKEDSESDDSMHFEYSSNPKRQRCVV</sequence>
<dbReference type="EMBL" id="AF157706">
    <property type="protein sequence ID" value="AAD49641.1"/>
    <property type="molecule type" value="Genomic_DNA"/>
</dbReference>
<dbReference type="RefSeq" id="NP_050208.1">
    <property type="nucleotide sequence ID" value="NC_000898.1"/>
</dbReference>
<dbReference type="SMR" id="Q9QJ40"/>
<dbReference type="DNASU" id="1497029"/>
<dbReference type="GeneID" id="1497029"/>
<dbReference type="KEGG" id="vg:1497029"/>
<dbReference type="Proteomes" id="UP000006930">
    <property type="component" value="Segment"/>
</dbReference>
<dbReference type="GO" id="GO:0003677">
    <property type="term" value="F:DNA binding"/>
    <property type="evidence" value="ECO:0007669"/>
    <property type="project" value="UniProtKB-KW"/>
</dbReference>
<dbReference type="GO" id="GO:0030337">
    <property type="term" value="F:DNA polymerase processivity factor activity"/>
    <property type="evidence" value="ECO:0007669"/>
    <property type="project" value="InterPro"/>
</dbReference>
<dbReference type="GO" id="GO:0006260">
    <property type="term" value="P:DNA replication"/>
    <property type="evidence" value="ECO:0007669"/>
    <property type="project" value="UniProtKB-KW"/>
</dbReference>
<dbReference type="GO" id="GO:0019079">
    <property type="term" value="P:viral genome replication"/>
    <property type="evidence" value="ECO:0007669"/>
    <property type="project" value="InterPro"/>
</dbReference>
<dbReference type="Gene3D" id="3.70.10.10">
    <property type="match status" value="1"/>
</dbReference>
<dbReference type="InterPro" id="IPR046938">
    <property type="entry name" value="DNA_clamp_sf"/>
</dbReference>
<dbReference type="InterPro" id="IPR004997">
    <property type="entry name" value="Herpes_PAP"/>
</dbReference>
<dbReference type="Pfam" id="PF03325">
    <property type="entry name" value="Herpes_PAP"/>
    <property type="match status" value="1"/>
</dbReference>
<dbReference type="SUPFAM" id="SSF55979">
    <property type="entry name" value="DNA clamp"/>
    <property type="match status" value="2"/>
</dbReference>